<comment type="function">
    <text evidence="2 3">Component of the biogenesis of lysosome-related organelles complex-1 (BLOC-1) involved in pigment granule biogenesis and membrane trafficking in synapses (PubMed:20015953, PubMed:28317021). In response to high synaptic activity at neuromuscular junctions, stabilizes Pldn protein levels and, together with Pldn, plays a role in promoting efficient synaptic vesicle recycling and re-formation through early endosomes (PubMed:28317021).</text>
</comment>
<comment type="subunit">
    <text evidence="2">Component of the biogenesis of lysosome-related organelles complex-1 (BLOC-1) composed of Blos1, Blos2, Blos3, Blos4, Dysb, Muted, Pldn and Snapin. Interacts with Pldn.</text>
</comment>
<comment type="disruption phenotype">
    <text evidence="2">Show reduced eye pigmentation.</text>
</comment>
<comment type="similarity">
    <text evidence="4">Belongs to the BLOC1S1 family.</text>
</comment>
<organism>
    <name type="scientific">Drosophila melanogaster</name>
    <name type="common">Fruit fly</name>
    <dbReference type="NCBI Taxonomy" id="7227"/>
    <lineage>
        <taxon>Eukaryota</taxon>
        <taxon>Metazoa</taxon>
        <taxon>Ecdysozoa</taxon>
        <taxon>Arthropoda</taxon>
        <taxon>Hexapoda</taxon>
        <taxon>Insecta</taxon>
        <taxon>Pterygota</taxon>
        <taxon>Neoptera</taxon>
        <taxon>Endopterygota</taxon>
        <taxon>Diptera</taxon>
        <taxon>Brachycera</taxon>
        <taxon>Muscomorpha</taxon>
        <taxon>Ephydroidea</taxon>
        <taxon>Drosophilidae</taxon>
        <taxon>Drosophila</taxon>
        <taxon>Sophophora</taxon>
    </lineage>
</organism>
<reference key="1">
    <citation type="journal article" date="2000" name="Science">
        <title>The genome sequence of Drosophila melanogaster.</title>
        <authorList>
            <person name="Adams M.D."/>
            <person name="Celniker S.E."/>
            <person name="Holt R.A."/>
            <person name="Evans C.A."/>
            <person name="Gocayne J.D."/>
            <person name="Amanatides P.G."/>
            <person name="Scherer S.E."/>
            <person name="Li P.W."/>
            <person name="Hoskins R.A."/>
            <person name="Galle R.F."/>
            <person name="George R.A."/>
            <person name="Lewis S.E."/>
            <person name="Richards S."/>
            <person name="Ashburner M."/>
            <person name="Henderson S.N."/>
            <person name="Sutton G.G."/>
            <person name="Wortman J.R."/>
            <person name="Yandell M.D."/>
            <person name="Zhang Q."/>
            <person name="Chen L.X."/>
            <person name="Brandon R.C."/>
            <person name="Rogers Y.-H.C."/>
            <person name="Blazej R.G."/>
            <person name="Champe M."/>
            <person name="Pfeiffer B.D."/>
            <person name="Wan K.H."/>
            <person name="Doyle C."/>
            <person name="Baxter E.G."/>
            <person name="Helt G."/>
            <person name="Nelson C.R."/>
            <person name="Miklos G.L.G."/>
            <person name="Abril J.F."/>
            <person name="Agbayani A."/>
            <person name="An H.-J."/>
            <person name="Andrews-Pfannkoch C."/>
            <person name="Baldwin D."/>
            <person name="Ballew R.M."/>
            <person name="Basu A."/>
            <person name="Baxendale J."/>
            <person name="Bayraktaroglu L."/>
            <person name="Beasley E.M."/>
            <person name="Beeson K.Y."/>
            <person name="Benos P.V."/>
            <person name="Berman B.P."/>
            <person name="Bhandari D."/>
            <person name="Bolshakov S."/>
            <person name="Borkova D."/>
            <person name="Botchan M.R."/>
            <person name="Bouck J."/>
            <person name="Brokstein P."/>
            <person name="Brottier P."/>
            <person name="Burtis K.C."/>
            <person name="Busam D.A."/>
            <person name="Butler H."/>
            <person name="Cadieu E."/>
            <person name="Center A."/>
            <person name="Chandra I."/>
            <person name="Cherry J.M."/>
            <person name="Cawley S."/>
            <person name="Dahlke C."/>
            <person name="Davenport L.B."/>
            <person name="Davies P."/>
            <person name="de Pablos B."/>
            <person name="Delcher A."/>
            <person name="Deng Z."/>
            <person name="Mays A.D."/>
            <person name="Dew I."/>
            <person name="Dietz S.M."/>
            <person name="Dodson K."/>
            <person name="Doup L.E."/>
            <person name="Downes M."/>
            <person name="Dugan-Rocha S."/>
            <person name="Dunkov B.C."/>
            <person name="Dunn P."/>
            <person name="Durbin K.J."/>
            <person name="Evangelista C.C."/>
            <person name="Ferraz C."/>
            <person name="Ferriera S."/>
            <person name="Fleischmann W."/>
            <person name="Fosler C."/>
            <person name="Gabrielian A.E."/>
            <person name="Garg N.S."/>
            <person name="Gelbart W.M."/>
            <person name="Glasser K."/>
            <person name="Glodek A."/>
            <person name="Gong F."/>
            <person name="Gorrell J.H."/>
            <person name="Gu Z."/>
            <person name="Guan P."/>
            <person name="Harris M."/>
            <person name="Harris N.L."/>
            <person name="Harvey D.A."/>
            <person name="Heiman T.J."/>
            <person name="Hernandez J.R."/>
            <person name="Houck J."/>
            <person name="Hostin D."/>
            <person name="Houston K.A."/>
            <person name="Howland T.J."/>
            <person name="Wei M.-H."/>
            <person name="Ibegwam C."/>
            <person name="Jalali M."/>
            <person name="Kalush F."/>
            <person name="Karpen G.H."/>
            <person name="Ke Z."/>
            <person name="Kennison J.A."/>
            <person name="Ketchum K.A."/>
            <person name="Kimmel B.E."/>
            <person name="Kodira C.D."/>
            <person name="Kraft C.L."/>
            <person name="Kravitz S."/>
            <person name="Kulp D."/>
            <person name="Lai Z."/>
            <person name="Lasko P."/>
            <person name="Lei Y."/>
            <person name="Levitsky A.A."/>
            <person name="Li J.H."/>
            <person name="Li Z."/>
            <person name="Liang Y."/>
            <person name="Lin X."/>
            <person name="Liu X."/>
            <person name="Mattei B."/>
            <person name="McIntosh T.C."/>
            <person name="McLeod M.P."/>
            <person name="McPherson D."/>
            <person name="Merkulov G."/>
            <person name="Milshina N.V."/>
            <person name="Mobarry C."/>
            <person name="Morris J."/>
            <person name="Moshrefi A."/>
            <person name="Mount S.M."/>
            <person name="Moy M."/>
            <person name="Murphy B."/>
            <person name="Murphy L."/>
            <person name="Muzny D.M."/>
            <person name="Nelson D.L."/>
            <person name="Nelson D.R."/>
            <person name="Nelson K.A."/>
            <person name="Nixon K."/>
            <person name="Nusskern D.R."/>
            <person name="Pacleb J.M."/>
            <person name="Palazzolo M."/>
            <person name="Pittman G.S."/>
            <person name="Pan S."/>
            <person name="Pollard J."/>
            <person name="Puri V."/>
            <person name="Reese M.G."/>
            <person name="Reinert K."/>
            <person name="Remington K."/>
            <person name="Saunders R.D.C."/>
            <person name="Scheeler F."/>
            <person name="Shen H."/>
            <person name="Shue B.C."/>
            <person name="Siden-Kiamos I."/>
            <person name="Simpson M."/>
            <person name="Skupski M.P."/>
            <person name="Smith T.J."/>
            <person name="Spier E."/>
            <person name="Spradling A.C."/>
            <person name="Stapleton M."/>
            <person name="Strong R."/>
            <person name="Sun E."/>
            <person name="Svirskas R."/>
            <person name="Tector C."/>
            <person name="Turner R."/>
            <person name="Venter E."/>
            <person name="Wang A.H."/>
            <person name="Wang X."/>
            <person name="Wang Z.-Y."/>
            <person name="Wassarman D.A."/>
            <person name="Weinstock G.M."/>
            <person name="Weissenbach J."/>
            <person name="Williams S.M."/>
            <person name="Woodage T."/>
            <person name="Worley K.C."/>
            <person name="Wu D."/>
            <person name="Yang S."/>
            <person name="Yao Q.A."/>
            <person name="Ye J."/>
            <person name="Yeh R.-F."/>
            <person name="Zaveri J.S."/>
            <person name="Zhan M."/>
            <person name="Zhang G."/>
            <person name="Zhao Q."/>
            <person name="Zheng L."/>
            <person name="Zheng X.H."/>
            <person name="Zhong F.N."/>
            <person name="Zhong W."/>
            <person name="Zhou X."/>
            <person name="Zhu S.C."/>
            <person name="Zhu X."/>
            <person name="Smith H.O."/>
            <person name="Gibbs R.A."/>
            <person name="Myers E.W."/>
            <person name="Rubin G.M."/>
            <person name="Venter J.C."/>
        </authorList>
    </citation>
    <scope>NUCLEOTIDE SEQUENCE [LARGE SCALE GENOMIC DNA]</scope>
    <source>
        <strain>Berkeley</strain>
    </source>
</reference>
<reference key="2">
    <citation type="journal article" date="2002" name="Genome Biol.">
        <title>Annotation of the Drosophila melanogaster euchromatic genome: a systematic review.</title>
        <authorList>
            <person name="Misra S."/>
            <person name="Crosby M.A."/>
            <person name="Mungall C.J."/>
            <person name="Matthews B.B."/>
            <person name="Campbell K.S."/>
            <person name="Hradecky P."/>
            <person name="Huang Y."/>
            <person name="Kaminker J.S."/>
            <person name="Millburn G.H."/>
            <person name="Prochnik S.E."/>
            <person name="Smith C.D."/>
            <person name="Tupy J.L."/>
            <person name="Whitfield E.J."/>
            <person name="Bayraktaroglu L."/>
            <person name="Berman B.P."/>
            <person name="Bettencourt B.R."/>
            <person name="Celniker S.E."/>
            <person name="de Grey A.D.N.J."/>
            <person name="Drysdale R.A."/>
            <person name="Harris N.L."/>
            <person name="Richter J."/>
            <person name="Russo S."/>
            <person name="Schroeder A.J."/>
            <person name="Shu S.Q."/>
            <person name="Stapleton M."/>
            <person name="Yamada C."/>
            <person name="Ashburner M."/>
            <person name="Gelbart W.M."/>
            <person name="Rubin G.M."/>
            <person name="Lewis S.E."/>
        </authorList>
    </citation>
    <scope>GENOME REANNOTATION</scope>
    <source>
        <strain>Berkeley</strain>
    </source>
</reference>
<reference key="3">
    <citation type="journal article" date="2010" name="Hum. Mol. Genet.">
        <title>Genetic modifiers of abnormal organelle biogenesis in a Drosophila model of BLOC-1 deficiency.</title>
        <authorList>
            <person name="Cheli V.T."/>
            <person name="Daniels R.W."/>
            <person name="Godoy R."/>
            <person name="Hoyle D.J."/>
            <person name="Kandachar V."/>
            <person name="Starcevic M."/>
            <person name="Martinez-Agosto J.A."/>
            <person name="Poole S."/>
            <person name="DiAntonio A."/>
            <person name="Lloyd V.K."/>
            <person name="Chang H.C."/>
            <person name="Krantz D.E."/>
            <person name="Dell'Angelica E.C."/>
        </authorList>
    </citation>
    <scope>IDENTIFICATION IN THE BLOC-1 COMPLEX</scope>
    <scope>FUNCTION</scope>
    <scope>INTERACTION WITH PLDN</scope>
    <scope>DISRUPTION PHENOTYPE</scope>
</reference>
<reference key="4">
    <citation type="journal article" date="2017" name="ENeuro">
        <title>The BLOC-1 Subunit Pallidin Facilitates Activity-Dependent Synaptic Vesicle Recycling.</title>
        <authorList>
            <person name="Chen X."/>
            <person name="Ma W."/>
            <person name="Zhang S."/>
            <person name="Paluch J."/>
            <person name="Guo W."/>
            <person name="Dickman D.K."/>
        </authorList>
    </citation>
    <scope>FUNCTION</scope>
</reference>
<proteinExistence type="evidence at protein level"/>
<keyword id="KW-1185">Reference proteome</keyword>
<dbReference type="EMBL" id="AE013599">
    <property type="protein sequence ID" value="AAM68556.2"/>
    <property type="molecule type" value="Genomic_DNA"/>
</dbReference>
<dbReference type="RefSeq" id="NP_725401.2">
    <property type="nucleotide sequence ID" value="NM_166060.3"/>
</dbReference>
<dbReference type="SMR" id="A1Z9S1"/>
<dbReference type="BioGRID" id="73022">
    <property type="interactions" value="70"/>
</dbReference>
<dbReference type="ComplexPortal" id="CPX-2753">
    <property type="entry name" value="BLOC-1 complex"/>
</dbReference>
<dbReference type="ComplexPortal" id="CPX-2760">
    <property type="entry name" value="BORC complex"/>
</dbReference>
<dbReference type="FunCoup" id="A1Z9S1">
    <property type="interactions" value="86"/>
</dbReference>
<dbReference type="IntAct" id="A1Z9S1">
    <property type="interactions" value="47"/>
</dbReference>
<dbReference type="STRING" id="7227.FBpp0290948"/>
<dbReference type="PaxDb" id="7227-FBpp0290948"/>
<dbReference type="EnsemblMetazoa" id="FBtr0301734">
    <property type="protein sequence ID" value="FBpp0290948"/>
    <property type="gene ID" value="FBgn0050077"/>
</dbReference>
<dbReference type="GeneID" id="246439"/>
<dbReference type="KEGG" id="dme:Dmel_CG30077"/>
<dbReference type="UCSC" id="CG30077-RA">
    <property type="organism name" value="d. melanogaster"/>
</dbReference>
<dbReference type="AGR" id="FB:FBgn0050077"/>
<dbReference type="CTD" id="246439"/>
<dbReference type="FlyBase" id="FBgn0050077">
    <property type="gene designation" value="Blos1"/>
</dbReference>
<dbReference type="VEuPathDB" id="VectorBase:FBgn0050077"/>
<dbReference type="eggNOG" id="KOG3390">
    <property type="taxonomic scope" value="Eukaryota"/>
</dbReference>
<dbReference type="GeneTree" id="ENSGT00390000002689"/>
<dbReference type="HOGENOM" id="CLU_115602_3_0_1"/>
<dbReference type="InParanoid" id="A1Z9S1"/>
<dbReference type="OMA" id="WMKIMEY"/>
<dbReference type="OrthoDB" id="20018at2759"/>
<dbReference type="PhylomeDB" id="A1Z9S1"/>
<dbReference type="Reactome" id="R-DME-432720">
    <property type="pathway name" value="Lysosome Vesicle Biogenesis"/>
</dbReference>
<dbReference type="BioGRID-ORCS" id="246439">
    <property type="hits" value="1 hit in 1 CRISPR screen"/>
</dbReference>
<dbReference type="GenomeRNAi" id="246439"/>
<dbReference type="PRO" id="PR:A1Z9S1"/>
<dbReference type="Proteomes" id="UP000000803">
    <property type="component" value="Chromosome 2R"/>
</dbReference>
<dbReference type="Bgee" id="FBgn0050077">
    <property type="expression patterns" value="Expressed in adult anterior midgut class I enteroendocrine cell in adult midgut (Drosophila) and 89 other cell types or tissues"/>
</dbReference>
<dbReference type="ExpressionAtlas" id="A1Z9S1">
    <property type="expression patterns" value="baseline and differential"/>
</dbReference>
<dbReference type="GO" id="GO:0031083">
    <property type="term" value="C:BLOC-1 complex"/>
    <property type="evidence" value="ECO:0000316"/>
    <property type="project" value="FlyBase"/>
</dbReference>
<dbReference type="GO" id="GO:0031594">
    <property type="term" value="C:neuromuscular junction"/>
    <property type="evidence" value="ECO:0000314"/>
    <property type="project" value="SynGO"/>
</dbReference>
<dbReference type="GO" id="GO:0098793">
    <property type="term" value="C:presynapse"/>
    <property type="evidence" value="ECO:0007669"/>
    <property type="project" value="GOC"/>
</dbReference>
<dbReference type="GO" id="GO:0061909">
    <property type="term" value="P:autophagosome-lysosome fusion"/>
    <property type="evidence" value="ECO:0000315"/>
    <property type="project" value="FlyBase"/>
</dbReference>
<dbReference type="GO" id="GO:0016197">
    <property type="term" value="P:endosomal transport"/>
    <property type="evidence" value="ECO:0000318"/>
    <property type="project" value="GO_Central"/>
</dbReference>
<dbReference type="GO" id="GO:0008057">
    <property type="term" value="P:eye pigment granule organization"/>
    <property type="evidence" value="ECO:0000315"/>
    <property type="project" value="FlyBase"/>
</dbReference>
<dbReference type="GO" id="GO:0007274">
    <property type="term" value="P:neuromuscular synaptic transmission"/>
    <property type="evidence" value="ECO:0000315"/>
    <property type="project" value="FlyBase"/>
</dbReference>
<dbReference type="GO" id="GO:0008355">
    <property type="term" value="P:olfactory learning"/>
    <property type="evidence" value="ECO:0000315"/>
    <property type="project" value="FlyBase"/>
</dbReference>
<dbReference type="GO" id="GO:0098693">
    <property type="term" value="P:regulation of synaptic vesicle cycle"/>
    <property type="evidence" value="ECO:0000314"/>
    <property type="project" value="SynGO"/>
</dbReference>
<dbReference type="GO" id="GO:0050808">
    <property type="term" value="P:synapse organization"/>
    <property type="evidence" value="ECO:0000315"/>
    <property type="project" value="FlyBase"/>
</dbReference>
<dbReference type="GO" id="GO:0036466">
    <property type="term" value="P:synaptic vesicle recycling via endosome"/>
    <property type="evidence" value="ECO:0000315"/>
    <property type="project" value="FlyBase"/>
</dbReference>
<dbReference type="GO" id="GO:0048489">
    <property type="term" value="P:synaptic vesicle transport"/>
    <property type="evidence" value="ECO:0000315"/>
    <property type="project" value="FlyBase"/>
</dbReference>
<dbReference type="InterPro" id="IPR009395">
    <property type="entry name" value="BLOC1S1"/>
</dbReference>
<dbReference type="PANTHER" id="PTHR13073:SF0">
    <property type="entry name" value="BIOGENESIS OF LYSOSOME-RELATED ORGANELLES COMPLEX 1 SUBUNIT 1"/>
    <property type="match status" value="1"/>
</dbReference>
<dbReference type="PANTHER" id="PTHR13073">
    <property type="entry name" value="BLOC-1 COMPLEX SUBUNIT 1"/>
    <property type="match status" value="1"/>
</dbReference>
<dbReference type="Pfam" id="PF06320">
    <property type="entry name" value="GCN5L1"/>
    <property type="match status" value="1"/>
</dbReference>
<feature type="chain" id="PRO_0000420192" description="Biogenesis of lysosome-related organelles complex 1 subunit 1">
    <location>
        <begin position="1"/>
        <end position="147"/>
    </location>
</feature>
<feature type="region of interest" description="Disordered" evidence="1">
    <location>
        <begin position="1"/>
        <end position="25"/>
    </location>
</feature>
<feature type="region of interest" description="Disordered" evidence="1">
    <location>
        <begin position="125"/>
        <end position="147"/>
    </location>
</feature>
<accession>A1Z9S1</accession>
<evidence type="ECO:0000256" key="1">
    <source>
        <dbReference type="SAM" id="MobiDB-lite"/>
    </source>
</evidence>
<evidence type="ECO:0000269" key="2">
    <source>
    </source>
</evidence>
<evidence type="ECO:0000269" key="3">
    <source>
    </source>
</evidence>
<evidence type="ECO:0000305" key="4"/>
<evidence type="ECO:0000312" key="5">
    <source>
        <dbReference type="FlyBase" id="FBgn0050077"/>
    </source>
</evidence>
<name>BL1S1_DROME</name>
<protein>
    <recommendedName>
        <fullName>Biogenesis of lysosome-related organelles complex 1 subunit 1</fullName>
        <shortName>BLOC-1 subunit 1</shortName>
    </recommendedName>
</protein>
<gene>
    <name evidence="5" type="primary">Blos1</name>
    <name evidence="5" type="synonym">CG30077</name>
</gene>
<sequence>MLTSMVKEHHKEQAKRKQEQEVRRKEAIEASNELTQSLVDTLNVGVAQAYLNQKRLDAEAKQLHLGATNFAKQTHQWLQLIDQFSTALKDLGDVENWARSIEGDMHTINQTLELAYKASRATQTSSGAGTSLEASTSASASANPSAT</sequence>